<keyword id="KW-0963">Cytoplasm</keyword>
<keyword id="KW-0206">Cytoskeleton</keyword>
<keyword id="KW-0493">Microtubule</keyword>
<keyword id="KW-0539">Nucleus</keyword>
<keyword id="KW-0597">Phosphoprotein</keyword>
<keyword id="KW-1185">Reference proteome</keyword>
<keyword id="KW-0819">tRNA processing</keyword>
<comment type="function">
    <text evidence="1 4">Component of the elongator complex, which is required for multiple tRNA modifications, including mcm5U (5-methoxycarbonylmethyl uridine), mcm5s2U (5-methoxycarbonylmethyl-2-thiouridine), and ncm5U (5-carbamoylmethyl uridine) (PubMed:36302967). The elongator complex catalyzes the formation of carboxymethyluridine in the wobble base at position 34 in tRNAs (PubMed:36302967). Binding by the elongator complex stabilizes microtubules and promotes their growth (PubMed:36302967). This induces central spindle asymmetry, promoting polarized signaling endosome trafficking during asymmetric cell division and cell fate assignation of sensory organ precursor cells (PubMed:36302967).</text>
</comment>
<comment type="pathway">
    <text evidence="1">tRNA modification; 5-methoxycarbonylmethyl-2-thiouridine-tRNA biosynthesis.</text>
</comment>
<comment type="subunit">
    <text evidence="4">Component of the elongator complex composed of Elp1, Elp2, Elp3, Elp4, Elp5 and Elp6 (PubMed:36302967). The elongator complex associates with and stabilizes microtubules; efficient interaction requires the full complex (PubMed:36302967).</text>
</comment>
<comment type="subcellular location">
    <subcellularLocation>
        <location evidence="1">Cytoplasm</location>
    </subcellularLocation>
    <subcellularLocation>
        <location evidence="1">Nucleus</location>
    </subcellularLocation>
    <subcellularLocation>
        <location evidence="4">Cytoplasm</location>
        <location evidence="4">Cytoskeleton</location>
        <location evidence="4">Spindle</location>
    </subcellularLocation>
    <text evidence="4">During asymmetric cell division of sensory organ precursor cells the elongator complex preferentially binds and stabilizes microtubules on the anterior side (pIIb daughter cell) of the spindle.</text>
</comment>
<comment type="disruption phenotype">
    <text evidence="4">RNAi-mediated knockdown is lethal in larval third instar (L3) stage.</text>
</comment>
<comment type="similarity">
    <text evidence="5">Belongs to the ELP4 family.</text>
</comment>
<comment type="caution">
    <text evidence="1">The elongator complex was originally thought to play a role in transcription elongation. However, it is no longer thought to play a direct role in this process and its primary function is thought to be in tRNA modification.</text>
</comment>
<gene>
    <name evidence="6" type="primary">Elp4</name>
    <name evidence="6" type="ORF">CG6907</name>
</gene>
<sequence>MTSFRKRTVQKPIRGTRTSPHTAQVITSSGNPYLDVVIGGGLPMGSICLIEEDRFMTHAKVLAKYFLAEGVISKQEIFLGSLDDIPAEMLRRLPRPLTDQESMEQSEVQALGDAGAENGLRIAWRYNDLPLVNSEHATAKIGHHFNLMEQMDSMMLYNVKTTLWDDSPKHLDIVIDEEFSKSSSPTTPSLEQQPVEDAPPIPGTETAPQEKMPAQEEENSANNNNNNNNNSSSVTSSTKTGSQDSPLQVFHNPRYKGLLNDIQQLLRNESFVAGTKNNLCRVCLTSLGSPLWYDEHFGEDLIKFLTLLMASVRNCNSVCLITMPMHLIAKYDASLVPKIRQLVDYAIELESFAGSERETHPAFKEYSGLLHLHKMSAINTLAVHMPETPDLAFKLRRKKFIIEKFHLPPELQESSAKPDNCISGLLSNSNATASLDF</sequence>
<proteinExistence type="evidence at protein level"/>
<name>ELP4_DROME</name>
<dbReference type="EMBL" id="AE014134">
    <property type="protein sequence ID" value="AAF52255.1"/>
    <property type="molecule type" value="Genomic_DNA"/>
</dbReference>
<dbReference type="EMBL" id="AE014134">
    <property type="protein sequence ID" value="AHN54143.1"/>
    <property type="molecule type" value="Genomic_DNA"/>
</dbReference>
<dbReference type="EMBL" id="AY075211">
    <property type="protein sequence ID" value="AAL68078.1"/>
    <property type="molecule type" value="mRNA"/>
</dbReference>
<dbReference type="RefSeq" id="NP_001285628.1">
    <property type="nucleotide sequence ID" value="NM_001298699.1"/>
</dbReference>
<dbReference type="RefSeq" id="NP_608932.1">
    <property type="nucleotide sequence ID" value="NM_135088.2"/>
</dbReference>
<dbReference type="SMR" id="Q9VMQ7"/>
<dbReference type="BioGRID" id="59943">
    <property type="interactions" value="7"/>
</dbReference>
<dbReference type="ComplexPortal" id="CPX-10346">
    <property type="entry name" value="Elongator holoenzyme complex"/>
</dbReference>
<dbReference type="FunCoup" id="Q9VMQ7">
    <property type="interactions" value="2010"/>
</dbReference>
<dbReference type="IntAct" id="Q9VMQ7">
    <property type="interactions" value="4"/>
</dbReference>
<dbReference type="STRING" id="7227.FBpp0078729"/>
<dbReference type="GlyGen" id="Q9VMQ7">
    <property type="glycosylation" value="1 site"/>
</dbReference>
<dbReference type="iPTMnet" id="Q9VMQ7"/>
<dbReference type="PaxDb" id="7227-FBpp0078729"/>
<dbReference type="DNASU" id="33775"/>
<dbReference type="EnsemblMetazoa" id="FBtr0079096">
    <property type="protein sequence ID" value="FBpp0078729"/>
    <property type="gene ID" value="FBgn0031711"/>
</dbReference>
<dbReference type="EnsemblMetazoa" id="FBtr0343257">
    <property type="protein sequence ID" value="FBpp0309927"/>
    <property type="gene ID" value="FBgn0031711"/>
</dbReference>
<dbReference type="GeneID" id="33775"/>
<dbReference type="KEGG" id="dme:Dmel_CG6907"/>
<dbReference type="UCSC" id="CG6907-RA">
    <property type="organism name" value="d. melanogaster"/>
</dbReference>
<dbReference type="AGR" id="FB:FBgn0031711"/>
<dbReference type="CTD" id="26610"/>
<dbReference type="FlyBase" id="FBgn0031711">
    <property type="gene designation" value="Elp4"/>
</dbReference>
<dbReference type="VEuPathDB" id="VectorBase:FBgn0031711"/>
<dbReference type="eggNOG" id="KOG3949">
    <property type="taxonomic scope" value="Eukaryota"/>
</dbReference>
<dbReference type="GeneTree" id="ENSGT00390000001443"/>
<dbReference type="HOGENOM" id="CLU_031345_3_1_1"/>
<dbReference type="InParanoid" id="Q9VMQ7"/>
<dbReference type="OMA" id="NTTMWDD"/>
<dbReference type="OrthoDB" id="289162at2759"/>
<dbReference type="PhylomeDB" id="Q9VMQ7"/>
<dbReference type="UniPathway" id="UPA00988"/>
<dbReference type="BioGRID-ORCS" id="33775">
    <property type="hits" value="0 hits in 1 CRISPR screen"/>
</dbReference>
<dbReference type="GenomeRNAi" id="33775"/>
<dbReference type="PRO" id="PR:Q9VMQ7"/>
<dbReference type="Proteomes" id="UP000000803">
    <property type="component" value="Chromosome 2L"/>
</dbReference>
<dbReference type="Bgee" id="FBgn0031711">
    <property type="expression patterns" value="Expressed in secondary oocyte and 85 other cell types or tissues"/>
</dbReference>
<dbReference type="ExpressionAtlas" id="Q9VMQ7">
    <property type="expression patterns" value="baseline and differential"/>
</dbReference>
<dbReference type="GO" id="GO:0005737">
    <property type="term" value="C:cytoplasm"/>
    <property type="evidence" value="ECO:0000250"/>
    <property type="project" value="UniProtKB"/>
</dbReference>
<dbReference type="GO" id="GO:0033588">
    <property type="term" value="C:elongator holoenzyme complex"/>
    <property type="evidence" value="ECO:0000314"/>
    <property type="project" value="FlyBase"/>
</dbReference>
<dbReference type="GO" id="GO:0005874">
    <property type="term" value="C:microtubule"/>
    <property type="evidence" value="ECO:0007669"/>
    <property type="project" value="UniProtKB-KW"/>
</dbReference>
<dbReference type="GO" id="GO:0005819">
    <property type="term" value="C:spindle"/>
    <property type="evidence" value="ECO:0007669"/>
    <property type="project" value="UniProtKB-SubCell"/>
</dbReference>
<dbReference type="GO" id="GO:0008023">
    <property type="term" value="C:transcription elongation factor complex"/>
    <property type="evidence" value="ECO:0000250"/>
    <property type="project" value="UniProtKB"/>
</dbReference>
<dbReference type="GO" id="GO:0008607">
    <property type="term" value="F:phosphorylase kinase regulator activity"/>
    <property type="evidence" value="ECO:0000250"/>
    <property type="project" value="UniProtKB"/>
</dbReference>
<dbReference type="GO" id="GO:0061867">
    <property type="term" value="P:establishment of mitotic spindle asymmetry"/>
    <property type="evidence" value="ECO:0000314"/>
    <property type="project" value="FlyBase"/>
</dbReference>
<dbReference type="GO" id="GO:0006357">
    <property type="term" value="P:regulation of transcription by RNA polymerase II"/>
    <property type="evidence" value="ECO:0000250"/>
    <property type="project" value="UniProtKB"/>
</dbReference>
<dbReference type="GO" id="GO:0002098">
    <property type="term" value="P:tRNA wobble uridine modification"/>
    <property type="evidence" value="ECO:0000318"/>
    <property type="project" value="GO_Central"/>
</dbReference>
<dbReference type="CDD" id="cd19494">
    <property type="entry name" value="Elp4"/>
    <property type="match status" value="1"/>
</dbReference>
<dbReference type="FunFam" id="3.40.50.300:FF:004509">
    <property type="entry name" value="Putative elongator complex protein 4"/>
    <property type="match status" value="1"/>
</dbReference>
<dbReference type="Gene3D" id="3.40.50.300">
    <property type="entry name" value="P-loop containing nucleotide triphosphate hydrolases"/>
    <property type="match status" value="2"/>
</dbReference>
<dbReference type="InterPro" id="IPR008728">
    <property type="entry name" value="Elongator_complex_protein_4"/>
</dbReference>
<dbReference type="InterPro" id="IPR027417">
    <property type="entry name" value="P-loop_NTPase"/>
</dbReference>
<dbReference type="PANTHER" id="PTHR12896:SF1">
    <property type="entry name" value="ELONGATOR COMPLEX PROTEIN 4"/>
    <property type="match status" value="1"/>
</dbReference>
<dbReference type="PANTHER" id="PTHR12896">
    <property type="entry name" value="PAX6 NEIGHBOR PROTEIN PAXNEB"/>
    <property type="match status" value="1"/>
</dbReference>
<dbReference type="Pfam" id="PF05625">
    <property type="entry name" value="PAXNEB"/>
    <property type="match status" value="1"/>
</dbReference>
<accession>Q9VMQ7</accession>
<accession>X2J4N6</accession>
<evidence type="ECO:0000250" key="1">
    <source>
        <dbReference type="UniProtKB" id="Q96EB1"/>
    </source>
</evidence>
<evidence type="ECO:0000256" key="2">
    <source>
        <dbReference type="SAM" id="MobiDB-lite"/>
    </source>
</evidence>
<evidence type="ECO:0000269" key="3">
    <source>
    </source>
</evidence>
<evidence type="ECO:0000269" key="4">
    <source>
    </source>
</evidence>
<evidence type="ECO:0000305" key="5"/>
<evidence type="ECO:0000312" key="6">
    <source>
        <dbReference type="FlyBase" id="FBgn0031711"/>
    </source>
</evidence>
<evidence type="ECO:0000312" key="7">
    <source>
        <dbReference type="Proteomes" id="UP000000803"/>
    </source>
</evidence>
<feature type="chain" id="PRO_0000284010" description="Elongator complex protein 4">
    <location>
        <begin position="1"/>
        <end position="437"/>
    </location>
</feature>
<feature type="region of interest" description="Disordered" evidence="2">
    <location>
        <begin position="179"/>
        <end position="247"/>
    </location>
</feature>
<feature type="compositionally biased region" description="Polar residues" evidence="2">
    <location>
        <begin position="181"/>
        <end position="192"/>
    </location>
</feature>
<feature type="compositionally biased region" description="Low complexity" evidence="2">
    <location>
        <begin position="220"/>
        <end position="237"/>
    </location>
</feature>
<feature type="modified residue" description="Phosphoserine" evidence="3">
    <location>
        <position position="183"/>
    </location>
</feature>
<feature type="modified residue" description="Phosphoserine" evidence="3">
    <location>
        <position position="242"/>
    </location>
</feature>
<protein>
    <recommendedName>
        <fullName evidence="5">Elongator complex protein 4</fullName>
    </recommendedName>
</protein>
<reference key="1">
    <citation type="journal article" date="2000" name="Science">
        <title>The genome sequence of Drosophila melanogaster.</title>
        <authorList>
            <person name="Adams M.D."/>
            <person name="Celniker S.E."/>
            <person name="Holt R.A."/>
            <person name="Evans C.A."/>
            <person name="Gocayne J.D."/>
            <person name="Amanatides P.G."/>
            <person name="Scherer S.E."/>
            <person name="Li P.W."/>
            <person name="Hoskins R.A."/>
            <person name="Galle R.F."/>
            <person name="George R.A."/>
            <person name="Lewis S.E."/>
            <person name="Richards S."/>
            <person name="Ashburner M."/>
            <person name="Henderson S.N."/>
            <person name="Sutton G.G."/>
            <person name="Wortman J.R."/>
            <person name="Yandell M.D."/>
            <person name="Zhang Q."/>
            <person name="Chen L.X."/>
            <person name="Brandon R.C."/>
            <person name="Rogers Y.-H.C."/>
            <person name="Blazej R.G."/>
            <person name="Champe M."/>
            <person name="Pfeiffer B.D."/>
            <person name="Wan K.H."/>
            <person name="Doyle C."/>
            <person name="Baxter E.G."/>
            <person name="Helt G."/>
            <person name="Nelson C.R."/>
            <person name="Miklos G.L.G."/>
            <person name="Abril J.F."/>
            <person name="Agbayani A."/>
            <person name="An H.-J."/>
            <person name="Andrews-Pfannkoch C."/>
            <person name="Baldwin D."/>
            <person name="Ballew R.M."/>
            <person name="Basu A."/>
            <person name="Baxendale J."/>
            <person name="Bayraktaroglu L."/>
            <person name="Beasley E.M."/>
            <person name="Beeson K.Y."/>
            <person name="Benos P.V."/>
            <person name="Berman B.P."/>
            <person name="Bhandari D."/>
            <person name="Bolshakov S."/>
            <person name="Borkova D."/>
            <person name="Botchan M.R."/>
            <person name="Bouck J."/>
            <person name="Brokstein P."/>
            <person name="Brottier P."/>
            <person name="Burtis K.C."/>
            <person name="Busam D.A."/>
            <person name="Butler H."/>
            <person name="Cadieu E."/>
            <person name="Center A."/>
            <person name="Chandra I."/>
            <person name="Cherry J.M."/>
            <person name="Cawley S."/>
            <person name="Dahlke C."/>
            <person name="Davenport L.B."/>
            <person name="Davies P."/>
            <person name="de Pablos B."/>
            <person name="Delcher A."/>
            <person name="Deng Z."/>
            <person name="Mays A.D."/>
            <person name="Dew I."/>
            <person name="Dietz S.M."/>
            <person name="Dodson K."/>
            <person name="Doup L.E."/>
            <person name="Downes M."/>
            <person name="Dugan-Rocha S."/>
            <person name="Dunkov B.C."/>
            <person name="Dunn P."/>
            <person name="Durbin K.J."/>
            <person name="Evangelista C.C."/>
            <person name="Ferraz C."/>
            <person name="Ferriera S."/>
            <person name="Fleischmann W."/>
            <person name="Fosler C."/>
            <person name="Gabrielian A.E."/>
            <person name="Garg N.S."/>
            <person name="Gelbart W.M."/>
            <person name="Glasser K."/>
            <person name="Glodek A."/>
            <person name="Gong F."/>
            <person name="Gorrell J.H."/>
            <person name="Gu Z."/>
            <person name="Guan P."/>
            <person name="Harris M."/>
            <person name="Harris N.L."/>
            <person name="Harvey D.A."/>
            <person name="Heiman T.J."/>
            <person name="Hernandez J.R."/>
            <person name="Houck J."/>
            <person name="Hostin D."/>
            <person name="Houston K.A."/>
            <person name="Howland T.J."/>
            <person name="Wei M.-H."/>
            <person name="Ibegwam C."/>
            <person name="Jalali M."/>
            <person name="Kalush F."/>
            <person name="Karpen G.H."/>
            <person name="Ke Z."/>
            <person name="Kennison J.A."/>
            <person name="Ketchum K.A."/>
            <person name="Kimmel B.E."/>
            <person name="Kodira C.D."/>
            <person name="Kraft C.L."/>
            <person name="Kravitz S."/>
            <person name="Kulp D."/>
            <person name="Lai Z."/>
            <person name="Lasko P."/>
            <person name="Lei Y."/>
            <person name="Levitsky A.A."/>
            <person name="Li J.H."/>
            <person name="Li Z."/>
            <person name="Liang Y."/>
            <person name="Lin X."/>
            <person name="Liu X."/>
            <person name="Mattei B."/>
            <person name="McIntosh T.C."/>
            <person name="McLeod M.P."/>
            <person name="McPherson D."/>
            <person name="Merkulov G."/>
            <person name="Milshina N.V."/>
            <person name="Mobarry C."/>
            <person name="Morris J."/>
            <person name="Moshrefi A."/>
            <person name="Mount S.M."/>
            <person name="Moy M."/>
            <person name="Murphy B."/>
            <person name="Murphy L."/>
            <person name="Muzny D.M."/>
            <person name="Nelson D.L."/>
            <person name="Nelson D.R."/>
            <person name="Nelson K.A."/>
            <person name="Nixon K."/>
            <person name="Nusskern D.R."/>
            <person name="Pacleb J.M."/>
            <person name="Palazzolo M."/>
            <person name="Pittman G.S."/>
            <person name="Pan S."/>
            <person name="Pollard J."/>
            <person name="Puri V."/>
            <person name="Reese M.G."/>
            <person name="Reinert K."/>
            <person name="Remington K."/>
            <person name="Saunders R.D.C."/>
            <person name="Scheeler F."/>
            <person name="Shen H."/>
            <person name="Shue B.C."/>
            <person name="Siden-Kiamos I."/>
            <person name="Simpson M."/>
            <person name="Skupski M.P."/>
            <person name="Smith T.J."/>
            <person name="Spier E."/>
            <person name="Spradling A.C."/>
            <person name="Stapleton M."/>
            <person name="Strong R."/>
            <person name="Sun E."/>
            <person name="Svirskas R."/>
            <person name="Tector C."/>
            <person name="Turner R."/>
            <person name="Venter E."/>
            <person name="Wang A.H."/>
            <person name="Wang X."/>
            <person name="Wang Z.-Y."/>
            <person name="Wassarman D.A."/>
            <person name="Weinstock G.M."/>
            <person name="Weissenbach J."/>
            <person name="Williams S.M."/>
            <person name="Woodage T."/>
            <person name="Worley K.C."/>
            <person name="Wu D."/>
            <person name="Yang S."/>
            <person name="Yao Q.A."/>
            <person name="Ye J."/>
            <person name="Yeh R.-F."/>
            <person name="Zaveri J.S."/>
            <person name="Zhan M."/>
            <person name="Zhang G."/>
            <person name="Zhao Q."/>
            <person name="Zheng L."/>
            <person name="Zheng X.H."/>
            <person name="Zhong F.N."/>
            <person name="Zhong W."/>
            <person name="Zhou X."/>
            <person name="Zhu S.C."/>
            <person name="Zhu X."/>
            <person name="Smith H.O."/>
            <person name="Gibbs R.A."/>
            <person name="Myers E.W."/>
            <person name="Rubin G.M."/>
            <person name="Venter J.C."/>
        </authorList>
    </citation>
    <scope>NUCLEOTIDE SEQUENCE [LARGE SCALE GENOMIC DNA]</scope>
    <source>
        <strain>Berkeley</strain>
    </source>
</reference>
<reference key="2">
    <citation type="journal article" date="2002" name="Genome Biol.">
        <title>Annotation of the Drosophila melanogaster euchromatic genome: a systematic review.</title>
        <authorList>
            <person name="Misra S."/>
            <person name="Crosby M.A."/>
            <person name="Mungall C.J."/>
            <person name="Matthews B.B."/>
            <person name="Campbell K.S."/>
            <person name="Hradecky P."/>
            <person name="Huang Y."/>
            <person name="Kaminker J.S."/>
            <person name="Millburn G.H."/>
            <person name="Prochnik S.E."/>
            <person name="Smith C.D."/>
            <person name="Tupy J.L."/>
            <person name="Whitfield E.J."/>
            <person name="Bayraktaroglu L."/>
            <person name="Berman B.P."/>
            <person name="Bettencourt B.R."/>
            <person name="Celniker S.E."/>
            <person name="de Grey A.D.N.J."/>
            <person name="Drysdale R.A."/>
            <person name="Harris N.L."/>
            <person name="Richter J."/>
            <person name="Russo S."/>
            <person name="Schroeder A.J."/>
            <person name="Shu S.Q."/>
            <person name="Stapleton M."/>
            <person name="Yamada C."/>
            <person name="Ashburner M."/>
            <person name="Gelbart W.M."/>
            <person name="Rubin G.M."/>
            <person name="Lewis S.E."/>
        </authorList>
    </citation>
    <scope>GENOME REANNOTATION</scope>
    <source>
        <strain>Berkeley</strain>
    </source>
</reference>
<reference key="3">
    <citation type="journal article" date="2002" name="Genome Biol.">
        <title>A Drosophila full-length cDNA resource.</title>
        <authorList>
            <person name="Stapleton M."/>
            <person name="Carlson J.W."/>
            <person name="Brokstein P."/>
            <person name="Yu C."/>
            <person name="Champe M."/>
            <person name="George R.A."/>
            <person name="Guarin H."/>
            <person name="Kronmiller B."/>
            <person name="Pacleb J.M."/>
            <person name="Park S."/>
            <person name="Wan K.H."/>
            <person name="Rubin G.M."/>
            <person name="Celniker S.E."/>
        </authorList>
    </citation>
    <scope>NUCLEOTIDE SEQUENCE [LARGE SCALE MRNA]</scope>
    <source>
        <strain>Berkeley</strain>
        <tissue>Testis</tissue>
    </source>
</reference>
<reference key="4">
    <citation type="journal article" date="2008" name="J. Proteome Res.">
        <title>Phosphoproteome analysis of Drosophila melanogaster embryos.</title>
        <authorList>
            <person name="Zhai B."/>
            <person name="Villen J."/>
            <person name="Beausoleil S.A."/>
            <person name="Mintseris J."/>
            <person name="Gygi S.P."/>
        </authorList>
    </citation>
    <scope>PHOSPHORYLATION [LARGE SCALE ANALYSIS] AT SER-183 AND SER-242</scope>
    <scope>IDENTIFICATION BY MASS SPECTROMETRY</scope>
    <source>
        <tissue>Embryo</tissue>
    </source>
</reference>
<reference key="5">
    <citation type="journal article" date="2022" name="Nat. Cell Biol.">
        <title>Elongator stabilizes microtubules to control central spindle asymmetry and polarized trafficking of cell fate determinants.</title>
        <authorList>
            <person name="Planelles-Herrero V.J."/>
            <person name="Bittleston A."/>
            <person name="Seum C."/>
            <person name="Daeden A."/>
            <person name="Gaitan M.G."/>
            <person name="Derivery E."/>
        </authorList>
    </citation>
    <scope>FUNCTION</scope>
    <scope>IDENTIFICATION IN THE ELONGATOR COMPLEX</scope>
    <scope>INTERACTION WITH MICROTUBULES</scope>
    <scope>SUBCELLULAR LOCATION</scope>
    <scope>DISRUPTION PHENOTYPE</scope>
    <scope>IDENTIFICATION BY MASS SPECTROMETRY</scope>
</reference>
<organism evidence="7">
    <name type="scientific">Drosophila melanogaster</name>
    <name type="common">Fruit fly</name>
    <dbReference type="NCBI Taxonomy" id="7227"/>
    <lineage>
        <taxon>Eukaryota</taxon>
        <taxon>Metazoa</taxon>
        <taxon>Ecdysozoa</taxon>
        <taxon>Arthropoda</taxon>
        <taxon>Hexapoda</taxon>
        <taxon>Insecta</taxon>
        <taxon>Pterygota</taxon>
        <taxon>Neoptera</taxon>
        <taxon>Endopterygota</taxon>
        <taxon>Diptera</taxon>
        <taxon>Brachycera</taxon>
        <taxon>Muscomorpha</taxon>
        <taxon>Ephydroidea</taxon>
        <taxon>Drosophilidae</taxon>
        <taxon>Drosophila</taxon>
        <taxon>Sophophora</taxon>
    </lineage>
</organism>